<dbReference type="EMBL" id="U34843">
    <property type="protein sequence ID" value="AAB60521.1"/>
    <property type="molecule type" value="mRNA"/>
</dbReference>
<dbReference type="EMBL" id="BC061527">
    <property type="protein sequence ID" value="AAH61527.1"/>
    <property type="molecule type" value="mRNA"/>
</dbReference>
<dbReference type="RefSeq" id="NP_446329.1">
    <property type="nucleotide sequence ID" value="NM_053877.4"/>
</dbReference>
<dbReference type="SMR" id="Q62834"/>
<dbReference type="FunCoup" id="Q62834">
    <property type="interactions" value="2936"/>
</dbReference>
<dbReference type="STRING" id="10116.ENSRNOP00000024016"/>
<dbReference type="PhosphoSitePlus" id="Q62834"/>
<dbReference type="jPOST" id="Q62834"/>
<dbReference type="PaxDb" id="10116-ENSRNOP00000024016"/>
<dbReference type="Ensembl" id="ENSRNOT00000116923.1">
    <property type="protein sequence ID" value="ENSRNOP00000096017.1"/>
    <property type="gene ID" value="ENSRNOG00000017770.8"/>
</dbReference>
<dbReference type="GeneID" id="116656"/>
<dbReference type="KEGG" id="rno:116656"/>
<dbReference type="AGR" id="RGD:619766"/>
<dbReference type="CTD" id="8872"/>
<dbReference type="RGD" id="619766">
    <property type="gene designation" value="Cdc123"/>
</dbReference>
<dbReference type="eggNOG" id="KOG2983">
    <property type="taxonomic scope" value="Eukaryota"/>
</dbReference>
<dbReference type="GeneTree" id="ENSGT00390000003057"/>
<dbReference type="HOGENOM" id="CLU_034402_0_0_1"/>
<dbReference type="InParanoid" id="Q62834"/>
<dbReference type="OMA" id="TFPDPNF"/>
<dbReference type="OrthoDB" id="360540at2759"/>
<dbReference type="PhylomeDB" id="Q62834"/>
<dbReference type="TreeFam" id="TF323348"/>
<dbReference type="PRO" id="PR:Q62834"/>
<dbReference type="Proteomes" id="UP000002494">
    <property type="component" value="Chromosome 17"/>
</dbReference>
<dbReference type="Bgee" id="ENSRNOG00000017770">
    <property type="expression patterns" value="Expressed in cerebellum and 20 other cell types or tissues"/>
</dbReference>
<dbReference type="GO" id="GO:0005737">
    <property type="term" value="C:cytoplasm"/>
    <property type="evidence" value="ECO:0000250"/>
    <property type="project" value="UniProtKB"/>
</dbReference>
<dbReference type="GO" id="GO:0005524">
    <property type="term" value="F:ATP binding"/>
    <property type="evidence" value="ECO:0000250"/>
    <property type="project" value="UniProtKB"/>
</dbReference>
<dbReference type="GO" id="GO:0000287">
    <property type="term" value="F:magnesium ion binding"/>
    <property type="evidence" value="ECO:0000250"/>
    <property type="project" value="UniProtKB"/>
</dbReference>
<dbReference type="GO" id="GO:0044183">
    <property type="term" value="F:protein folding chaperone"/>
    <property type="evidence" value="ECO:0000250"/>
    <property type="project" value="UniProtKB"/>
</dbReference>
<dbReference type="GO" id="GO:1905143">
    <property type="term" value="P:eukaryotic translation initiation factor 2 complex assembly"/>
    <property type="evidence" value="ECO:0000250"/>
    <property type="project" value="UniProtKB"/>
</dbReference>
<dbReference type="InterPro" id="IPR009772">
    <property type="entry name" value="CDC123"/>
</dbReference>
<dbReference type="PANTHER" id="PTHR15323:SF6">
    <property type="entry name" value="CELL DIVISION CYCLE PROTEIN 123 HOMOLOG"/>
    <property type="match status" value="1"/>
</dbReference>
<dbReference type="PANTHER" id="PTHR15323">
    <property type="entry name" value="D123 PROTEIN"/>
    <property type="match status" value="1"/>
</dbReference>
<dbReference type="Pfam" id="PF07065">
    <property type="entry name" value="D123"/>
    <property type="match status" value="1"/>
</dbReference>
<dbReference type="PIRSF" id="PIRSF007807">
    <property type="entry name" value="Cdc123"/>
    <property type="match status" value="1"/>
</dbReference>
<sequence>MKKEHVSHCQFSAWYPLFRSLTIKSVILPLPQNVKDYLLDDGTLVVSGREDPPTCSQPDSGDEAEETQWSDDESTATLTAPEFPEFNTQVQEAINSLGGSVFPKLNWSAPRDAYWIAMNSSLKCKSLSDIFLLFKSSDFITHDFTQPFIHCNDDSPDPCIEYELVLRKWCELIPGAEFRCFVKENKLIGISQRDYTQYYDHISKQKEEICRCIQDFFKEHLQYKFLDEDFVFDIYRDSRGKVWLIDFNPFGEVTDSLLFTWEELTSENNLRGDVSEADALEQDSPAFRCTNSEVTVQPSPYLSYGLPKDFVDLSTGEDAHKLIDFLKLKRNQQEDD</sequence>
<organism>
    <name type="scientific">Rattus norvegicus</name>
    <name type="common">Rat</name>
    <dbReference type="NCBI Taxonomy" id="10116"/>
    <lineage>
        <taxon>Eukaryota</taxon>
        <taxon>Metazoa</taxon>
        <taxon>Chordata</taxon>
        <taxon>Craniata</taxon>
        <taxon>Vertebrata</taxon>
        <taxon>Euteleostomi</taxon>
        <taxon>Mammalia</taxon>
        <taxon>Eutheria</taxon>
        <taxon>Euarchontoglires</taxon>
        <taxon>Glires</taxon>
        <taxon>Rodentia</taxon>
        <taxon>Myomorpha</taxon>
        <taxon>Muroidea</taxon>
        <taxon>Muridae</taxon>
        <taxon>Murinae</taxon>
        <taxon>Rattus</taxon>
    </lineage>
</organism>
<keyword id="KW-0067">ATP-binding</keyword>
<keyword id="KW-0143">Chaperone</keyword>
<keyword id="KW-0963">Cytoplasm</keyword>
<keyword id="KW-0460">Magnesium</keyword>
<keyword id="KW-0479">Metal-binding</keyword>
<keyword id="KW-0547">Nucleotide-binding</keyword>
<keyword id="KW-0597">Phosphoprotein</keyword>
<keyword id="KW-1185">Reference proteome</keyword>
<keyword id="KW-0832">Ubl conjugation</keyword>
<comment type="function">
    <text evidence="1 2">ATP-dependent protein-folding chaperone for the eIF2 complex (By similarity). Binds to the gamma subunit of the eIF2 complex which allows the subunit to assemble with the alpha and beta subunits (By similarity).</text>
</comment>
<comment type="subunit">
    <text evidence="1">Interacts with the eIF2 complex gamma subunit EIF2S3 (via C-terminus); the interaction is direct. Interacts with the eIF2 complex alpha subunit EIF2S1. Interacts with the eIF2 complex beta subunit EIF2S2.</text>
</comment>
<comment type="subcellular location">
    <subcellularLocation>
        <location evidence="8">Cytoplasm</location>
    </subcellularLocation>
</comment>
<comment type="tissue specificity">
    <text evidence="8">Frequently detected in granular vesicles, in the cytoplasm of some epithelial, stromal and sperm cells and in varicosities lining nervous fibers, while it appears to be absent in endothelial and smooth muscle cells (at protein level). Widely expressed. Expressed at high level in testis.</text>
</comment>
<comment type="PTM">
    <text evidence="6">Phosphorylated.</text>
</comment>
<comment type="PTM">
    <text>The Val-109 variant is degraded by the proteasome suggesting that it is polyubiquitinated.</text>
</comment>
<comment type="similarity">
    <text evidence="9">Belongs to the CDC123 family.</text>
</comment>
<gene>
    <name type="primary">Cdc123</name>
    <name type="synonym">D123</name>
</gene>
<name>CD123_RAT</name>
<evidence type="ECO:0000250" key="1">
    <source>
        <dbReference type="UniProtKB" id="O75794"/>
    </source>
</evidence>
<evidence type="ECO:0000250" key="2">
    <source>
        <dbReference type="UniProtKB" id="Q05791"/>
    </source>
</evidence>
<evidence type="ECO:0000250" key="3">
    <source>
        <dbReference type="UniProtKB" id="Q9P7N5"/>
    </source>
</evidence>
<evidence type="ECO:0000256" key="4">
    <source>
        <dbReference type="SAM" id="MobiDB-lite"/>
    </source>
</evidence>
<evidence type="ECO:0000269" key="5">
    <source>
    </source>
</evidence>
<evidence type="ECO:0000269" key="6">
    <source>
    </source>
</evidence>
<evidence type="ECO:0000269" key="7">
    <source>
    </source>
</evidence>
<evidence type="ECO:0000269" key="8">
    <source>
    </source>
</evidence>
<evidence type="ECO:0000305" key="9"/>
<reference key="1">
    <citation type="journal article" date="1996" name="Exp. Cell Res.">
        <title>An amino acid change in novel protein D123 is responsible for temperature-sensitive G1-phase arrest in a mutant of rat fibroblast line 3Y1.</title>
        <authorList>
            <person name="Okuda A."/>
            <person name="Kimura G."/>
        </authorList>
    </citation>
    <scope>NUCLEOTIDE SEQUENCE [MRNA]</scope>
    <scope>VARIANT VAL-109</scope>
    <source>
        <strain>Fischer</strain>
    </source>
</reference>
<reference key="2">
    <citation type="journal article" date="2004" name="Genome Res.">
        <title>The status, quality, and expansion of the NIH full-length cDNA project: the Mammalian Gene Collection (MGC).</title>
        <authorList>
            <consortium name="The MGC Project Team"/>
        </authorList>
    </citation>
    <scope>NUCLEOTIDE SEQUENCE [LARGE SCALE MRNA]</scope>
    <source>
        <tissue>Pituitary</tissue>
    </source>
</reference>
<reference key="3">
    <citation type="journal article" date="1998" name="Exp. Cell Res.">
        <title>Expression study on D123 gene product: evidence for high positivity in testis.</title>
        <authorList>
            <person name="Onisto M."/>
            <person name="Zeilante P."/>
            <person name="Scannapieco P."/>
            <person name="Pellati D."/>
            <person name="Pozza M."/>
            <person name="Caenazzo C."/>
            <person name="Negro A."/>
            <person name="Garbisa S."/>
        </authorList>
    </citation>
    <scope>SUBCELLULAR LOCATION</scope>
    <scope>TISSUE SPECIFICITY</scope>
</reference>
<reference key="4">
    <citation type="journal article" date="1999" name="Cell Struct. Funct.">
        <title>Extensive degradation of mutant-type D123 protein is responsible for temperature-sensitive proliferation inhibition in 3Y1tsD123 cells.</title>
        <authorList>
            <person name="Okuda A."/>
            <person name="Ohtsu M."/>
            <person name="Kimura G."/>
        </authorList>
    </citation>
    <scope>DEGRADATION OF VARIANT VAL-109</scope>
</reference>
<reference key="5">
    <citation type="journal article" date="2001" name="Cell Struct. Funct.">
        <title>Reversion of temperature-sensitive mutation by inhibition of proteasome-mediated degradation of mutated D123 protein.</title>
        <authorList>
            <person name="Okuda A."/>
            <person name="Ohtsu M."/>
            <person name="Kimura G."/>
        </authorList>
    </citation>
    <scope>DEGRADATION OF VARIANT VAL-109</scope>
    <scope>PHOSPHORYLATION</scope>
</reference>
<proteinExistence type="evidence at protein level"/>
<accession>Q62834</accession>
<feature type="chain" id="PRO_0000228665" description="Translation initiation factor eIF2 assembly protein">
    <location>
        <begin position="1"/>
        <end position="336"/>
    </location>
</feature>
<feature type="region of interest" description="Disordered" evidence="4">
    <location>
        <begin position="48"/>
        <end position="73"/>
    </location>
</feature>
<feature type="compositionally biased region" description="Acidic residues" evidence="4">
    <location>
        <begin position="60"/>
        <end position="73"/>
    </location>
</feature>
<feature type="binding site" evidence="1">
    <location>
        <position position="104"/>
    </location>
    <ligand>
        <name>ATP</name>
        <dbReference type="ChEBI" id="CHEBI:30616"/>
    </ligand>
</feature>
<feature type="binding site" evidence="1">
    <location>
        <position position="107"/>
    </location>
    <ligand>
        <name>ATP</name>
        <dbReference type="ChEBI" id="CHEBI:30616"/>
    </ligand>
</feature>
<feature type="binding site" evidence="1">
    <location>
        <position position="109"/>
    </location>
    <ligand>
        <name>ATP</name>
        <dbReference type="ChEBI" id="CHEBI:30616"/>
    </ligand>
</feature>
<feature type="binding site" evidence="3">
    <location>
        <position position="111"/>
    </location>
    <ligand>
        <name>ATP</name>
        <dbReference type="ChEBI" id="CHEBI:30616"/>
    </ligand>
</feature>
<feature type="binding site" evidence="3">
    <location>
        <position position="167"/>
    </location>
    <ligand>
        <name>ATP</name>
        <dbReference type="ChEBI" id="CHEBI:30616"/>
    </ligand>
</feature>
<feature type="binding site" evidence="1">
    <location>
        <position position="168"/>
    </location>
    <ligand>
        <name>ATP</name>
        <dbReference type="ChEBI" id="CHEBI:30616"/>
    </ligand>
</feature>
<feature type="binding site" evidence="3">
    <location>
        <position position="169"/>
    </location>
    <ligand>
        <name>ATP</name>
        <dbReference type="ChEBI" id="CHEBI:30616"/>
    </ligand>
</feature>
<feature type="binding site" evidence="1">
    <location>
        <position position="170"/>
    </location>
    <ligand>
        <name>ATP</name>
        <dbReference type="ChEBI" id="CHEBI:30616"/>
    </ligand>
</feature>
<feature type="binding site" evidence="1">
    <location>
        <position position="177"/>
    </location>
    <ligand>
        <name>ATP</name>
        <dbReference type="ChEBI" id="CHEBI:30616"/>
    </ligand>
</feature>
<feature type="binding site" evidence="1">
    <location>
        <position position="179"/>
    </location>
    <ligand>
        <name>ATP</name>
        <dbReference type="ChEBI" id="CHEBI:30616"/>
    </ligand>
</feature>
<feature type="binding site" evidence="1">
    <location>
        <position position="193"/>
    </location>
    <ligand>
        <name>ATP</name>
        <dbReference type="ChEBI" id="CHEBI:30616"/>
    </ligand>
</feature>
<feature type="binding site" evidence="3">
    <location>
        <position position="233"/>
    </location>
    <ligand>
        <name>ATP</name>
        <dbReference type="ChEBI" id="CHEBI:30616"/>
    </ligand>
</feature>
<feature type="binding site" evidence="1">
    <location>
        <position position="246"/>
    </location>
    <ligand>
        <name>ATP</name>
        <dbReference type="ChEBI" id="CHEBI:30616"/>
    </ligand>
</feature>
<feature type="binding site" evidence="1">
    <location>
        <position position="246"/>
    </location>
    <ligand>
        <name>Mg(2+)</name>
        <dbReference type="ChEBI" id="CHEBI:18420"/>
    </ligand>
</feature>
<feature type="binding site" evidence="1">
    <location>
        <position position="248"/>
    </location>
    <ligand>
        <name>ATP</name>
        <dbReference type="ChEBI" id="CHEBI:30616"/>
    </ligand>
</feature>
<feature type="binding site" evidence="1">
    <location>
        <position position="248"/>
    </location>
    <ligand>
        <name>Mg(2+)</name>
        <dbReference type="ChEBI" id="CHEBI:18420"/>
    </ligand>
</feature>
<feature type="modified residue" description="Phosphoserine" evidence="1">
    <location>
        <position position="60"/>
    </location>
</feature>
<feature type="sequence variant" description="In 3Y1tsD123 cell line; reversibly arrested in G1 phase of cell cycle at the restrictive temperature of 39.8 degrees Celsius; due to extensive degradation by the proteasome." evidence="5 6 7">
    <original>A</original>
    <variation>V</variation>
    <location>
        <position position="109"/>
    </location>
</feature>
<protein>
    <recommendedName>
        <fullName evidence="9">Translation initiation factor eIF2 assembly protein</fullName>
    </recommendedName>
    <alternativeName>
        <fullName>Cell division cycle protein 123 homolog</fullName>
        <shortName>Protein D123</shortName>
    </alternativeName>
</protein>